<sequence length="442" mass="49370">MIKAIKGFNDILPAQSAKWLYLESILADVLGRYGYEHIRLPIVEQTDLFARAIGGATDIVEKEMYSFTDKSDPPTPLTLRPEGTAGAVRAVNEHNLLRGDTPKLWYIGPMFRYERPQKGRYRQFHQLGVESFGSALPDADAELIAMTHLMWQELGLKDEMRLQLNSLGERDERHAYREALVTYLTDKQEQLDEDSKRRLTTNPLRILDSKEASTQALLIDAPKLANFLGEESVAHFEQVQTYLTELGIDFEINPHLVRGLDYYNKTVFEWVTDKLGSQATVCAGGRYDGLVGQLKSIDTRDAKADAKADAKADSKPVKSEPAVGFAMGLERLLLLIDAVAPIADIPACDVFVVAHPEVYSAGIGYAQNLRYSRPDLRVKMASATSLKAQMKKADKSGAALTVIIAQQEIDDKTISIKDMQTGEQKTAAQDWLSDKDNFCRRK</sequence>
<gene>
    <name evidence="1" type="primary">hisS</name>
    <name type="ordered locus">Psyc_0683</name>
</gene>
<comment type="catalytic activity">
    <reaction evidence="1">
        <text>tRNA(His) + L-histidine + ATP = L-histidyl-tRNA(His) + AMP + diphosphate + H(+)</text>
        <dbReference type="Rhea" id="RHEA:17313"/>
        <dbReference type="Rhea" id="RHEA-COMP:9665"/>
        <dbReference type="Rhea" id="RHEA-COMP:9689"/>
        <dbReference type="ChEBI" id="CHEBI:15378"/>
        <dbReference type="ChEBI" id="CHEBI:30616"/>
        <dbReference type="ChEBI" id="CHEBI:33019"/>
        <dbReference type="ChEBI" id="CHEBI:57595"/>
        <dbReference type="ChEBI" id="CHEBI:78442"/>
        <dbReference type="ChEBI" id="CHEBI:78527"/>
        <dbReference type="ChEBI" id="CHEBI:456215"/>
        <dbReference type="EC" id="6.1.1.21"/>
    </reaction>
</comment>
<comment type="subunit">
    <text evidence="1">Homodimer.</text>
</comment>
<comment type="subcellular location">
    <subcellularLocation>
        <location evidence="1">Cytoplasm</location>
    </subcellularLocation>
</comment>
<comment type="similarity">
    <text evidence="1">Belongs to the class-II aminoacyl-tRNA synthetase family.</text>
</comment>
<name>SYH_PSYA2</name>
<accession>Q4FTW6</accession>
<protein>
    <recommendedName>
        <fullName evidence="1">Histidine--tRNA ligase</fullName>
        <ecNumber evidence="1">6.1.1.21</ecNumber>
    </recommendedName>
    <alternativeName>
        <fullName evidence="1">Histidyl-tRNA synthetase</fullName>
        <shortName evidence="1">HisRS</shortName>
    </alternativeName>
</protein>
<organism>
    <name type="scientific">Psychrobacter arcticus (strain DSM 17307 / VKM B-2377 / 273-4)</name>
    <dbReference type="NCBI Taxonomy" id="259536"/>
    <lineage>
        <taxon>Bacteria</taxon>
        <taxon>Pseudomonadati</taxon>
        <taxon>Pseudomonadota</taxon>
        <taxon>Gammaproteobacteria</taxon>
        <taxon>Moraxellales</taxon>
        <taxon>Moraxellaceae</taxon>
        <taxon>Psychrobacter</taxon>
    </lineage>
</organism>
<evidence type="ECO:0000255" key="1">
    <source>
        <dbReference type="HAMAP-Rule" id="MF_00127"/>
    </source>
</evidence>
<dbReference type="EC" id="6.1.1.21" evidence="1"/>
<dbReference type="EMBL" id="CP000082">
    <property type="protein sequence ID" value="AAZ18542.1"/>
    <property type="molecule type" value="Genomic_DNA"/>
</dbReference>
<dbReference type="RefSeq" id="WP_011279969.1">
    <property type="nucleotide sequence ID" value="NC_007204.1"/>
</dbReference>
<dbReference type="SMR" id="Q4FTW6"/>
<dbReference type="STRING" id="259536.Psyc_0683"/>
<dbReference type="KEGG" id="par:Psyc_0683"/>
<dbReference type="eggNOG" id="COG0124">
    <property type="taxonomic scope" value="Bacteria"/>
</dbReference>
<dbReference type="HOGENOM" id="CLU_025113_1_1_6"/>
<dbReference type="OrthoDB" id="9800814at2"/>
<dbReference type="Proteomes" id="UP000000546">
    <property type="component" value="Chromosome"/>
</dbReference>
<dbReference type="GO" id="GO:0005737">
    <property type="term" value="C:cytoplasm"/>
    <property type="evidence" value="ECO:0007669"/>
    <property type="project" value="UniProtKB-SubCell"/>
</dbReference>
<dbReference type="GO" id="GO:0005524">
    <property type="term" value="F:ATP binding"/>
    <property type="evidence" value="ECO:0007669"/>
    <property type="project" value="UniProtKB-UniRule"/>
</dbReference>
<dbReference type="GO" id="GO:0004821">
    <property type="term" value="F:histidine-tRNA ligase activity"/>
    <property type="evidence" value="ECO:0007669"/>
    <property type="project" value="UniProtKB-UniRule"/>
</dbReference>
<dbReference type="GO" id="GO:0006427">
    <property type="term" value="P:histidyl-tRNA aminoacylation"/>
    <property type="evidence" value="ECO:0007669"/>
    <property type="project" value="UniProtKB-UniRule"/>
</dbReference>
<dbReference type="CDD" id="cd00773">
    <property type="entry name" value="HisRS-like_core"/>
    <property type="match status" value="1"/>
</dbReference>
<dbReference type="FunFam" id="3.30.930.10:FF:000005">
    <property type="entry name" value="Histidine--tRNA ligase"/>
    <property type="match status" value="1"/>
</dbReference>
<dbReference type="Gene3D" id="3.40.50.800">
    <property type="entry name" value="Anticodon-binding domain"/>
    <property type="match status" value="1"/>
</dbReference>
<dbReference type="Gene3D" id="3.30.930.10">
    <property type="entry name" value="Bira Bifunctional Protein, Domain 2"/>
    <property type="match status" value="1"/>
</dbReference>
<dbReference type="HAMAP" id="MF_00127">
    <property type="entry name" value="His_tRNA_synth"/>
    <property type="match status" value="1"/>
</dbReference>
<dbReference type="InterPro" id="IPR006195">
    <property type="entry name" value="aa-tRNA-synth_II"/>
</dbReference>
<dbReference type="InterPro" id="IPR045864">
    <property type="entry name" value="aa-tRNA-synth_II/BPL/LPL"/>
</dbReference>
<dbReference type="InterPro" id="IPR004154">
    <property type="entry name" value="Anticodon-bd"/>
</dbReference>
<dbReference type="InterPro" id="IPR036621">
    <property type="entry name" value="Anticodon-bd_dom_sf"/>
</dbReference>
<dbReference type="InterPro" id="IPR015807">
    <property type="entry name" value="His-tRNA-ligase"/>
</dbReference>
<dbReference type="InterPro" id="IPR041715">
    <property type="entry name" value="HisRS-like_core"/>
</dbReference>
<dbReference type="InterPro" id="IPR004516">
    <property type="entry name" value="HisRS/HisZ"/>
</dbReference>
<dbReference type="NCBIfam" id="TIGR00442">
    <property type="entry name" value="hisS"/>
    <property type="match status" value="1"/>
</dbReference>
<dbReference type="PANTHER" id="PTHR43707:SF1">
    <property type="entry name" value="HISTIDINE--TRNA LIGASE, MITOCHONDRIAL-RELATED"/>
    <property type="match status" value="1"/>
</dbReference>
<dbReference type="PANTHER" id="PTHR43707">
    <property type="entry name" value="HISTIDYL-TRNA SYNTHETASE"/>
    <property type="match status" value="1"/>
</dbReference>
<dbReference type="Pfam" id="PF03129">
    <property type="entry name" value="HGTP_anticodon"/>
    <property type="match status" value="1"/>
</dbReference>
<dbReference type="Pfam" id="PF13393">
    <property type="entry name" value="tRNA-synt_His"/>
    <property type="match status" value="1"/>
</dbReference>
<dbReference type="PIRSF" id="PIRSF001549">
    <property type="entry name" value="His-tRNA_synth"/>
    <property type="match status" value="1"/>
</dbReference>
<dbReference type="SUPFAM" id="SSF52954">
    <property type="entry name" value="Class II aaRS ABD-related"/>
    <property type="match status" value="1"/>
</dbReference>
<dbReference type="SUPFAM" id="SSF55681">
    <property type="entry name" value="Class II aaRS and biotin synthetases"/>
    <property type="match status" value="1"/>
</dbReference>
<dbReference type="PROSITE" id="PS50862">
    <property type="entry name" value="AA_TRNA_LIGASE_II"/>
    <property type="match status" value="1"/>
</dbReference>
<feature type="chain" id="PRO_0000136231" description="Histidine--tRNA ligase">
    <location>
        <begin position="1"/>
        <end position="442"/>
    </location>
</feature>
<proteinExistence type="inferred from homology"/>
<keyword id="KW-0030">Aminoacyl-tRNA synthetase</keyword>
<keyword id="KW-0067">ATP-binding</keyword>
<keyword id="KW-0963">Cytoplasm</keyword>
<keyword id="KW-0436">Ligase</keyword>
<keyword id="KW-0547">Nucleotide-binding</keyword>
<keyword id="KW-0648">Protein biosynthesis</keyword>
<keyword id="KW-1185">Reference proteome</keyword>
<reference key="1">
    <citation type="journal article" date="2010" name="Appl. Environ. Microbiol.">
        <title>The genome sequence of Psychrobacter arcticus 273-4, a psychroactive Siberian permafrost bacterium, reveals mechanisms for adaptation to low-temperature growth.</title>
        <authorList>
            <person name="Ayala-del-Rio H.L."/>
            <person name="Chain P.S."/>
            <person name="Grzymski J.J."/>
            <person name="Ponder M.A."/>
            <person name="Ivanova N."/>
            <person name="Bergholz P.W."/>
            <person name="Di Bartolo G."/>
            <person name="Hauser L."/>
            <person name="Land M."/>
            <person name="Bakermans C."/>
            <person name="Rodrigues D."/>
            <person name="Klappenbach J."/>
            <person name="Zarka D."/>
            <person name="Larimer F."/>
            <person name="Richardson P."/>
            <person name="Murray A."/>
            <person name="Thomashow M."/>
            <person name="Tiedje J.M."/>
        </authorList>
    </citation>
    <scope>NUCLEOTIDE SEQUENCE [LARGE SCALE GENOMIC DNA]</scope>
    <source>
        <strain>DSM 17307 / VKM B-2377 / 273-4</strain>
    </source>
</reference>